<sequence length="538" mass="59067">MTDLNKVINELGELGIYDVKEIVHNPSYEQLFEEETKPGLAGFEKGVVTTSGAVAVDTGIFTGRSPKDKYIVLDEKTKNTVWWTSDAAKNDNKPMNQETWQSLKGLVTKQLSGKRLFVIDAFCGANPDTRLAVRIVTEVAWQAHFVKNMFIRPSDEELQNFKPDFTVMNGSKVTNPNWKEQGLNSENFVAFNITEGVQLIGGTWYGGEMKKGMFSMMNYFLPLKGIASMHCSANVGKDGDVAIFFGLSGTGKTTLSTDPKRQLIGDDEHGWDDDGVFNYEGGCYAKTIKLSAESEPDIYRAIRRDALLENVVVREDGSVDFDDGSKTENTRVSYPIYHIDNIVKPVSKAGHATKVIFLTADAFGVLPPVSKLTPEQTKYYFLSGFTAKLAGTERGITEPTPTFSACFGAAFLSLHPTQYAEVLVKRMKDSGAEAYLVNTGWNGTGKRISIKDTRGIIDAILDGSIESAEMGSLPIFDLAIPKALPGVDPAILDPRDTYADKAQWQAKAEDLASRFVKNFEKYATNEEGKALIAAGPKA</sequence>
<accession>Q0I554</accession>
<organism>
    <name type="scientific">Histophilus somni (strain 129Pt)</name>
    <name type="common">Haemophilus somnus</name>
    <dbReference type="NCBI Taxonomy" id="205914"/>
    <lineage>
        <taxon>Bacteria</taxon>
        <taxon>Pseudomonadati</taxon>
        <taxon>Pseudomonadota</taxon>
        <taxon>Gammaproteobacteria</taxon>
        <taxon>Pasteurellales</taxon>
        <taxon>Pasteurellaceae</taxon>
        <taxon>Histophilus</taxon>
    </lineage>
</organism>
<reference key="1">
    <citation type="journal article" date="2007" name="J. Bacteriol.">
        <title>Complete genome sequence of Haemophilus somnus (Histophilus somni) strain 129Pt and comparison to Haemophilus ducreyi 35000HP and Haemophilus influenzae Rd.</title>
        <authorList>
            <person name="Challacombe J.F."/>
            <person name="Duncan A.J."/>
            <person name="Brettin T.S."/>
            <person name="Bruce D."/>
            <person name="Chertkov O."/>
            <person name="Detter J.C."/>
            <person name="Han C.S."/>
            <person name="Misra M."/>
            <person name="Richardson P."/>
            <person name="Tapia R."/>
            <person name="Thayer N."/>
            <person name="Xie G."/>
            <person name="Inzana T.J."/>
        </authorList>
    </citation>
    <scope>NUCLEOTIDE SEQUENCE [LARGE SCALE GENOMIC DNA]</scope>
    <source>
        <strain>129Pt</strain>
    </source>
</reference>
<keyword id="KW-0067">ATP-binding</keyword>
<keyword id="KW-0963">Cytoplasm</keyword>
<keyword id="KW-0210">Decarboxylase</keyword>
<keyword id="KW-0312">Gluconeogenesis</keyword>
<keyword id="KW-0456">Lyase</keyword>
<keyword id="KW-0464">Manganese</keyword>
<keyword id="KW-0479">Metal-binding</keyword>
<keyword id="KW-0547">Nucleotide-binding</keyword>
<comment type="function">
    <text evidence="1">Involved in the gluconeogenesis. Catalyzes the conversion of oxaloacetate (OAA) to phosphoenolpyruvate (PEP) through direct phosphoryl transfer between the nucleoside triphosphate and OAA.</text>
</comment>
<comment type="catalytic activity">
    <reaction evidence="1">
        <text>oxaloacetate + ATP = phosphoenolpyruvate + ADP + CO2</text>
        <dbReference type="Rhea" id="RHEA:18617"/>
        <dbReference type="ChEBI" id="CHEBI:16452"/>
        <dbReference type="ChEBI" id="CHEBI:16526"/>
        <dbReference type="ChEBI" id="CHEBI:30616"/>
        <dbReference type="ChEBI" id="CHEBI:58702"/>
        <dbReference type="ChEBI" id="CHEBI:456216"/>
        <dbReference type="EC" id="4.1.1.49"/>
    </reaction>
</comment>
<comment type="cofactor">
    <cofactor evidence="1">
        <name>Mn(2+)</name>
        <dbReference type="ChEBI" id="CHEBI:29035"/>
    </cofactor>
    <text evidence="1">Binds 1 Mn(2+) ion per subunit.</text>
</comment>
<comment type="pathway">
    <text evidence="1">Carbohydrate biosynthesis; gluconeogenesis.</text>
</comment>
<comment type="subunit">
    <text evidence="1">Monomer.</text>
</comment>
<comment type="subcellular location">
    <subcellularLocation>
        <location evidence="1">Cytoplasm</location>
    </subcellularLocation>
</comment>
<comment type="similarity">
    <text evidence="1">Belongs to the phosphoenolpyruvate carboxykinase (ATP) family.</text>
</comment>
<protein>
    <recommendedName>
        <fullName evidence="1">Phosphoenolpyruvate carboxykinase (ATP)</fullName>
        <shortName evidence="1">PCK</shortName>
        <shortName evidence="1">PEP carboxykinase</shortName>
        <shortName evidence="1">PEPCK</shortName>
        <ecNumber evidence="1">4.1.1.49</ecNumber>
    </recommendedName>
</protein>
<name>PCKA_HISS1</name>
<dbReference type="EC" id="4.1.1.49" evidence="1"/>
<dbReference type="EMBL" id="CP000436">
    <property type="protein sequence ID" value="ABI25896.1"/>
    <property type="molecule type" value="Genomic_DNA"/>
</dbReference>
<dbReference type="SMR" id="Q0I554"/>
<dbReference type="KEGG" id="hso:HS_1628"/>
<dbReference type="eggNOG" id="COG1866">
    <property type="taxonomic scope" value="Bacteria"/>
</dbReference>
<dbReference type="HOGENOM" id="CLU_018247_0_1_6"/>
<dbReference type="UniPathway" id="UPA00138"/>
<dbReference type="GO" id="GO:0005829">
    <property type="term" value="C:cytosol"/>
    <property type="evidence" value="ECO:0007669"/>
    <property type="project" value="TreeGrafter"/>
</dbReference>
<dbReference type="GO" id="GO:0005524">
    <property type="term" value="F:ATP binding"/>
    <property type="evidence" value="ECO:0007669"/>
    <property type="project" value="UniProtKB-UniRule"/>
</dbReference>
<dbReference type="GO" id="GO:0046872">
    <property type="term" value="F:metal ion binding"/>
    <property type="evidence" value="ECO:0007669"/>
    <property type="project" value="UniProtKB-KW"/>
</dbReference>
<dbReference type="GO" id="GO:0004612">
    <property type="term" value="F:phosphoenolpyruvate carboxykinase (ATP) activity"/>
    <property type="evidence" value="ECO:0007669"/>
    <property type="project" value="UniProtKB-UniRule"/>
</dbReference>
<dbReference type="GO" id="GO:0006094">
    <property type="term" value="P:gluconeogenesis"/>
    <property type="evidence" value="ECO:0007669"/>
    <property type="project" value="UniProtKB-UniRule"/>
</dbReference>
<dbReference type="CDD" id="cd00484">
    <property type="entry name" value="PEPCK_ATP"/>
    <property type="match status" value="1"/>
</dbReference>
<dbReference type="FunFam" id="2.170.8.10:FF:000001">
    <property type="entry name" value="Phosphoenolpyruvate carboxykinase (ATP)"/>
    <property type="match status" value="1"/>
</dbReference>
<dbReference type="FunFam" id="3.40.449.10:FF:000001">
    <property type="entry name" value="Phosphoenolpyruvate carboxykinase (ATP)"/>
    <property type="match status" value="1"/>
</dbReference>
<dbReference type="Gene3D" id="3.90.228.20">
    <property type="match status" value="1"/>
</dbReference>
<dbReference type="Gene3D" id="3.40.449.10">
    <property type="entry name" value="Phosphoenolpyruvate Carboxykinase, domain 1"/>
    <property type="match status" value="1"/>
</dbReference>
<dbReference type="Gene3D" id="2.170.8.10">
    <property type="entry name" value="Phosphoenolpyruvate Carboxykinase, domain 2"/>
    <property type="match status" value="1"/>
</dbReference>
<dbReference type="HAMAP" id="MF_00453">
    <property type="entry name" value="PEPCK_ATP"/>
    <property type="match status" value="1"/>
</dbReference>
<dbReference type="InterPro" id="IPR001272">
    <property type="entry name" value="PEP_carboxykinase_ATP"/>
</dbReference>
<dbReference type="InterPro" id="IPR013035">
    <property type="entry name" value="PEP_carboxykinase_C"/>
</dbReference>
<dbReference type="InterPro" id="IPR008210">
    <property type="entry name" value="PEP_carboxykinase_N"/>
</dbReference>
<dbReference type="InterPro" id="IPR015994">
    <property type="entry name" value="PEPCK_ATP_CS"/>
</dbReference>
<dbReference type="NCBIfam" id="TIGR00224">
    <property type="entry name" value="pckA"/>
    <property type="match status" value="1"/>
</dbReference>
<dbReference type="NCBIfam" id="NF006819">
    <property type="entry name" value="PRK09344.1-1"/>
    <property type="match status" value="1"/>
</dbReference>
<dbReference type="NCBIfam" id="NF006820">
    <property type="entry name" value="PRK09344.1-2"/>
    <property type="match status" value="1"/>
</dbReference>
<dbReference type="NCBIfam" id="NF006821">
    <property type="entry name" value="PRK09344.1-3"/>
    <property type="match status" value="1"/>
</dbReference>
<dbReference type="PANTHER" id="PTHR30031:SF0">
    <property type="entry name" value="PHOSPHOENOLPYRUVATE CARBOXYKINASE (ATP)"/>
    <property type="match status" value="1"/>
</dbReference>
<dbReference type="PANTHER" id="PTHR30031">
    <property type="entry name" value="PHOSPHOENOLPYRUVATE CARBOXYKINASE ATP"/>
    <property type="match status" value="1"/>
</dbReference>
<dbReference type="Pfam" id="PF01293">
    <property type="entry name" value="PEPCK_ATP"/>
    <property type="match status" value="1"/>
</dbReference>
<dbReference type="PIRSF" id="PIRSF006294">
    <property type="entry name" value="PEP_crbxkin"/>
    <property type="match status" value="1"/>
</dbReference>
<dbReference type="SUPFAM" id="SSF68923">
    <property type="entry name" value="PEP carboxykinase N-terminal domain"/>
    <property type="match status" value="1"/>
</dbReference>
<dbReference type="SUPFAM" id="SSF53795">
    <property type="entry name" value="PEP carboxykinase-like"/>
    <property type="match status" value="1"/>
</dbReference>
<dbReference type="PROSITE" id="PS00532">
    <property type="entry name" value="PEPCK_ATP"/>
    <property type="match status" value="1"/>
</dbReference>
<feature type="chain" id="PRO_1000026329" description="Phosphoenolpyruvate carboxykinase (ATP)">
    <location>
        <begin position="1"/>
        <end position="538"/>
    </location>
</feature>
<feature type="binding site" evidence="1">
    <location>
        <position position="64"/>
    </location>
    <ligand>
        <name>substrate</name>
    </ligand>
</feature>
<feature type="binding site" evidence="1">
    <location>
        <position position="205"/>
    </location>
    <ligand>
        <name>substrate</name>
    </ligand>
</feature>
<feature type="binding site" evidence="1">
    <location>
        <position position="211"/>
    </location>
    <ligand>
        <name>ATP</name>
        <dbReference type="ChEBI" id="CHEBI:30616"/>
    </ligand>
</feature>
<feature type="binding site" evidence="1">
    <location>
        <position position="211"/>
    </location>
    <ligand>
        <name>Mn(2+)</name>
        <dbReference type="ChEBI" id="CHEBI:29035"/>
    </ligand>
</feature>
<feature type="binding site" evidence="1">
    <location>
        <position position="211"/>
    </location>
    <ligand>
        <name>substrate</name>
    </ligand>
</feature>
<feature type="binding site" evidence="1">
    <location>
        <position position="230"/>
    </location>
    <ligand>
        <name>ATP</name>
        <dbReference type="ChEBI" id="CHEBI:30616"/>
    </ligand>
</feature>
<feature type="binding site" evidence="1">
    <location>
        <position position="230"/>
    </location>
    <ligand>
        <name>Mn(2+)</name>
        <dbReference type="ChEBI" id="CHEBI:29035"/>
    </ligand>
</feature>
<feature type="binding site" evidence="1">
    <location>
        <begin position="246"/>
        <end position="254"/>
    </location>
    <ligand>
        <name>ATP</name>
        <dbReference type="ChEBI" id="CHEBI:30616"/>
    </ligand>
</feature>
<feature type="binding site" evidence="1">
    <location>
        <position position="267"/>
    </location>
    <ligand>
        <name>Mn(2+)</name>
        <dbReference type="ChEBI" id="CHEBI:29035"/>
    </ligand>
</feature>
<feature type="binding site" evidence="1">
    <location>
        <position position="295"/>
    </location>
    <ligand>
        <name>ATP</name>
        <dbReference type="ChEBI" id="CHEBI:30616"/>
    </ligand>
</feature>
<feature type="binding site" evidence="1">
    <location>
        <position position="331"/>
    </location>
    <ligand>
        <name>ATP</name>
        <dbReference type="ChEBI" id="CHEBI:30616"/>
    </ligand>
</feature>
<feature type="binding site" evidence="1">
    <location>
        <position position="331"/>
    </location>
    <ligand>
        <name>substrate</name>
    </ligand>
</feature>
<feature type="binding site" evidence="1">
    <location>
        <begin position="447"/>
        <end position="448"/>
    </location>
    <ligand>
        <name>ATP</name>
        <dbReference type="ChEBI" id="CHEBI:30616"/>
    </ligand>
</feature>
<feature type="binding site" evidence="1">
    <location>
        <position position="453"/>
    </location>
    <ligand>
        <name>ATP</name>
        <dbReference type="ChEBI" id="CHEBI:30616"/>
    </ligand>
</feature>
<proteinExistence type="inferred from homology"/>
<evidence type="ECO:0000255" key="1">
    <source>
        <dbReference type="HAMAP-Rule" id="MF_00453"/>
    </source>
</evidence>
<gene>
    <name evidence="1" type="primary">pckA</name>
    <name type="ordered locus">HS_1628</name>
</gene>